<accession>Q6HLG0</accession>
<gene>
    <name type="ordered locus">BT9727_1277</name>
</gene>
<comment type="similarity">
    <text evidence="1">Belongs to the UPF0180 family.</text>
</comment>
<sequence length="82" mass="8725">MRIMAKIGVENSLTDVQQALKQQGHEVVTLNSEQDAQGCDCCVVTGQDSNMMGIADASIKGSVITAHGLTTDEVCQQVESRT</sequence>
<name>Y1277_BACHK</name>
<feature type="chain" id="PRO_0000172740" description="UPF0180 protein BT9727_1277">
    <location>
        <begin position="1"/>
        <end position="82"/>
    </location>
</feature>
<dbReference type="EMBL" id="AE017355">
    <property type="protein sequence ID" value="AAT61953.1"/>
    <property type="molecule type" value="Genomic_DNA"/>
</dbReference>
<dbReference type="RefSeq" id="YP_035611.1">
    <property type="nucleotide sequence ID" value="NC_005957.1"/>
</dbReference>
<dbReference type="KEGG" id="btk:BT9727_1277"/>
<dbReference type="PATRIC" id="fig|281309.8.peg.1346"/>
<dbReference type="HOGENOM" id="CLU_187365_0_0_9"/>
<dbReference type="Proteomes" id="UP000001301">
    <property type="component" value="Chromosome"/>
</dbReference>
<dbReference type="HAMAP" id="MF_00506">
    <property type="entry name" value="UPF0180"/>
    <property type="match status" value="1"/>
</dbReference>
<dbReference type="InterPro" id="IPR005370">
    <property type="entry name" value="UPF0180"/>
</dbReference>
<dbReference type="NCBIfam" id="NF002845">
    <property type="entry name" value="PRK03094.1"/>
    <property type="match status" value="1"/>
</dbReference>
<dbReference type="Pfam" id="PF03698">
    <property type="entry name" value="UPF0180"/>
    <property type="match status" value="1"/>
</dbReference>
<reference key="1">
    <citation type="journal article" date="2006" name="J. Bacteriol.">
        <title>Pathogenomic sequence analysis of Bacillus cereus and Bacillus thuringiensis isolates closely related to Bacillus anthracis.</title>
        <authorList>
            <person name="Han C.S."/>
            <person name="Xie G."/>
            <person name="Challacombe J.F."/>
            <person name="Altherr M.R."/>
            <person name="Bhotika S.S."/>
            <person name="Bruce D."/>
            <person name="Campbell C.S."/>
            <person name="Campbell M.L."/>
            <person name="Chen J."/>
            <person name="Chertkov O."/>
            <person name="Cleland C."/>
            <person name="Dimitrijevic M."/>
            <person name="Doggett N.A."/>
            <person name="Fawcett J.J."/>
            <person name="Glavina T."/>
            <person name="Goodwin L.A."/>
            <person name="Hill K.K."/>
            <person name="Hitchcock P."/>
            <person name="Jackson P.J."/>
            <person name="Keim P."/>
            <person name="Kewalramani A.R."/>
            <person name="Longmire J."/>
            <person name="Lucas S."/>
            <person name="Malfatti S."/>
            <person name="McMurry K."/>
            <person name="Meincke L.J."/>
            <person name="Misra M."/>
            <person name="Moseman B.L."/>
            <person name="Mundt M."/>
            <person name="Munk A.C."/>
            <person name="Okinaka R.T."/>
            <person name="Parson-Quintana B."/>
            <person name="Reilly L.P."/>
            <person name="Richardson P."/>
            <person name="Robinson D.L."/>
            <person name="Rubin E."/>
            <person name="Saunders E."/>
            <person name="Tapia R."/>
            <person name="Tesmer J.G."/>
            <person name="Thayer N."/>
            <person name="Thompson L.S."/>
            <person name="Tice H."/>
            <person name="Ticknor L.O."/>
            <person name="Wills P.L."/>
            <person name="Brettin T.S."/>
            <person name="Gilna P."/>
        </authorList>
    </citation>
    <scope>NUCLEOTIDE SEQUENCE [LARGE SCALE GENOMIC DNA]</scope>
    <source>
        <strain>97-27</strain>
    </source>
</reference>
<evidence type="ECO:0000255" key="1">
    <source>
        <dbReference type="HAMAP-Rule" id="MF_00506"/>
    </source>
</evidence>
<proteinExistence type="inferred from homology"/>
<protein>
    <recommendedName>
        <fullName evidence="1">UPF0180 protein BT9727_1277</fullName>
    </recommendedName>
</protein>
<organism>
    <name type="scientific">Bacillus thuringiensis subsp. konkukian (strain 97-27)</name>
    <dbReference type="NCBI Taxonomy" id="281309"/>
    <lineage>
        <taxon>Bacteria</taxon>
        <taxon>Bacillati</taxon>
        <taxon>Bacillota</taxon>
        <taxon>Bacilli</taxon>
        <taxon>Bacillales</taxon>
        <taxon>Bacillaceae</taxon>
        <taxon>Bacillus</taxon>
        <taxon>Bacillus cereus group</taxon>
    </lineage>
</organism>